<reference key="1">
    <citation type="journal article" date="1997" name="Science">
        <title>The complete genome sequence of Escherichia coli K-12.</title>
        <authorList>
            <person name="Blattner F.R."/>
            <person name="Plunkett G. III"/>
            <person name="Bloch C.A."/>
            <person name="Perna N.T."/>
            <person name="Burland V."/>
            <person name="Riley M."/>
            <person name="Collado-Vides J."/>
            <person name="Glasner J.D."/>
            <person name="Rode C.K."/>
            <person name="Mayhew G.F."/>
            <person name="Gregor J."/>
            <person name="Davis N.W."/>
            <person name="Kirkpatrick H.A."/>
            <person name="Goeden M.A."/>
            <person name="Rose D.J."/>
            <person name="Mau B."/>
            <person name="Shao Y."/>
        </authorList>
    </citation>
    <scope>NUCLEOTIDE SEQUENCE [LARGE SCALE GENOMIC DNA]</scope>
    <source>
        <strain>K12 / MG1655 / ATCC 47076</strain>
    </source>
</reference>
<reference key="2">
    <citation type="journal article" date="2006" name="Mol. Syst. Biol.">
        <title>Highly accurate genome sequences of Escherichia coli K-12 strains MG1655 and W3110.</title>
        <authorList>
            <person name="Hayashi K."/>
            <person name="Morooka N."/>
            <person name="Yamamoto Y."/>
            <person name="Fujita K."/>
            <person name="Isono K."/>
            <person name="Choi S."/>
            <person name="Ohtsubo E."/>
            <person name="Baba T."/>
            <person name="Wanner B.L."/>
            <person name="Mori H."/>
            <person name="Horiuchi T."/>
        </authorList>
    </citation>
    <scope>NUCLEOTIDE SEQUENCE [LARGE SCALE GENOMIC DNA]</scope>
    <source>
        <strain>K12 / W3110 / ATCC 27325 / DSM 5911</strain>
    </source>
</reference>
<feature type="chain" id="PRO_0000169282" description="UPF0380 protein YfjQ">
    <location>
        <begin position="1"/>
        <end position="273"/>
    </location>
</feature>
<dbReference type="EMBL" id="U36840">
    <property type="protein sequence ID" value="AAA79802.1"/>
    <property type="molecule type" value="Genomic_DNA"/>
</dbReference>
<dbReference type="EMBL" id="U00096">
    <property type="protein sequence ID" value="AAC75681.1"/>
    <property type="molecule type" value="Genomic_DNA"/>
</dbReference>
<dbReference type="EMBL" id="AP009048">
    <property type="protein sequence ID" value="BAE76768.1"/>
    <property type="molecule type" value="Genomic_DNA"/>
</dbReference>
<dbReference type="PIR" id="T08645">
    <property type="entry name" value="T08645"/>
</dbReference>
<dbReference type="RefSeq" id="NP_417122.1">
    <property type="nucleotide sequence ID" value="NC_000913.3"/>
</dbReference>
<dbReference type="RefSeq" id="WP_000197391.1">
    <property type="nucleotide sequence ID" value="NZ_LN832404.1"/>
</dbReference>
<dbReference type="BioGRID" id="4262017">
    <property type="interactions" value="17"/>
</dbReference>
<dbReference type="FunCoup" id="P52132">
    <property type="interactions" value="106"/>
</dbReference>
<dbReference type="IntAct" id="P52132">
    <property type="interactions" value="2"/>
</dbReference>
<dbReference type="STRING" id="511145.b2633"/>
<dbReference type="PaxDb" id="511145-b2633"/>
<dbReference type="EnsemblBacteria" id="AAC75681">
    <property type="protein sequence ID" value="AAC75681"/>
    <property type="gene ID" value="b2633"/>
</dbReference>
<dbReference type="GeneID" id="947127"/>
<dbReference type="KEGG" id="ecj:JW2614"/>
<dbReference type="KEGG" id="eco:b2633"/>
<dbReference type="KEGG" id="ecoc:C3026_14565"/>
<dbReference type="PATRIC" id="fig|511145.12.peg.2727"/>
<dbReference type="EchoBASE" id="EB2995"/>
<dbReference type="eggNOG" id="ENOG502Z7MD">
    <property type="taxonomic scope" value="Bacteria"/>
</dbReference>
<dbReference type="HOGENOM" id="CLU_059317_0_0_6"/>
<dbReference type="InParanoid" id="P52132"/>
<dbReference type="OMA" id="ILAPRRF"/>
<dbReference type="OrthoDB" id="4554729at2"/>
<dbReference type="PhylomeDB" id="P52132"/>
<dbReference type="BioCyc" id="EcoCyc:G7368-MONOMER"/>
<dbReference type="PRO" id="PR:P52132"/>
<dbReference type="Proteomes" id="UP000000625">
    <property type="component" value="Chromosome"/>
</dbReference>
<dbReference type="InterPro" id="IPR026325">
    <property type="entry name" value="DUF932"/>
</dbReference>
<dbReference type="Pfam" id="PF06067">
    <property type="entry name" value="DUF932"/>
    <property type="match status" value="1"/>
</dbReference>
<comment type="similarity">
    <text evidence="1">Belongs to the UPF0380 family.</text>
</comment>
<accession>P52132</accession>
<accession>Q2MAD8</accession>
<protein>
    <recommendedName>
        <fullName>UPF0380 protein YfjQ</fullName>
    </recommendedName>
</protein>
<gene>
    <name type="primary">yfjQ</name>
    <name type="ordered locus">b2633</name>
    <name type="ordered locus">JW2614</name>
</gene>
<keyword id="KW-1185">Reference proteome</keyword>
<organism>
    <name type="scientific">Escherichia coli (strain K12)</name>
    <dbReference type="NCBI Taxonomy" id="83333"/>
    <lineage>
        <taxon>Bacteria</taxon>
        <taxon>Pseudomonadati</taxon>
        <taxon>Pseudomonadota</taxon>
        <taxon>Gammaproteobacteria</taxon>
        <taxon>Enterobacterales</taxon>
        <taxon>Enterobacteriaceae</taxon>
        <taxon>Escherichia</taxon>
    </lineage>
</organism>
<evidence type="ECO:0000305" key="1"/>
<name>YFJQ_ECOLI</name>
<sequence>MTRLASRFGAANLIRRDRPLTREELFRVVPSVFSEDKHESRSERYTYIPTISLLDSLQREGFQPFFACQTRVRDPRRREHTKHMLRLRREGQITGKQVPEIILLNSHDGTSSYQMLPGMFRAVCQNGLVCGESFGEVRVPHKGDVVSQVIEGAYEVLGIFERVEEKRDAMQSLLLPPPVQQALAKAALTYRFGEDHQPVTESQILSPRRWQDESNDLWTTYQRIQENLIKGGLSGRNAKGGRTHTRAVRGIDGDVKLNRALWVMAETLLTQLQ</sequence>
<proteinExistence type="inferred from homology"/>